<keyword id="KW-0963">Cytoplasm</keyword>
<keyword id="KW-0489">Methyltransferase</keyword>
<keyword id="KW-1185">Reference proteome</keyword>
<keyword id="KW-0698">rRNA processing</keyword>
<keyword id="KW-0949">S-adenosyl-L-methionine</keyword>
<keyword id="KW-0808">Transferase</keyword>
<comment type="function">
    <text evidence="1">Specifically methylates the N7 position of guanine in position 527 of 16S rRNA.</text>
</comment>
<comment type="catalytic activity">
    <reaction evidence="1">
        <text>guanosine(527) in 16S rRNA + S-adenosyl-L-methionine = N(7)-methylguanosine(527) in 16S rRNA + S-adenosyl-L-homocysteine</text>
        <dbReference type="Rhea" id="RHEA:42732"/>
        <dbReference type="Rhea" id="RHEA-COMP:10209"/>
        <dbReference type="Rhea" id="RHEA-COMP:10210"/>
        <dbReference type="ChEBI" id="CHEBI:57856"/>
        <dbReference type="ChEBI" id="CHEBI:59789"/>
        <dbReference type="ChEBI" id="CHEBI:74269"/>
        <dbReference type="ChEBI" id="CHEBI:74480"/>
        <dbReference type="EC" id="2.1.1.170"/>
    </reaction>
</comment>
<comment type="subcellular location">
    <subcellularLocation>
        <location evidence="1">Cytoplasm</location>
    </subcellularLocation>
</comment>
<comment type="similarity">
    <text evidence="1">Belongs to the methyltransferase superfamily. RNA methyltransferase RsmG family.</text>
</comment>
<evidence type="ECO:0000255" key="1">
    <source>
        <dbReference type="HAMAP-Rule" id="MF_00074"/>
    </source>
</evidence>
<protein>
    <recommendedName>
        <fullName evidence="1">Ribosomal RNA small subunit methyltransferase G 3</fullName>
        <ecNumber evidence="1">2.1.1.170</ecNumber>
    </recommendedName>
    <alternativeName>
        <fullName evidence="1">16S rRNA 7-methylguanosine methyltransferase 3</fullName>
        <shortName evidence="1">16S rRNA m7G methyltransferase 3</shortName>
    </alternativeName>
</protein>
<name>RSMG3_BDEBA</name>
<organism>
    <name type="scientific">Bdellovibrio bacteriovorus (strain ATCC 15356 / DSM 50701 / NCIMB 9529 / HD100)</name>
    <dbReference type="NCBI Taxonomy" id="264462"/>
    <lineage>
        <taxon>Bacteria</taxon>
        <taxon>Pseudomonadati</taxon>
        <taxon>Bdellovibrionota</taxon>
        <taxon>Bdellovibrionia</taxon>
        <taxon>Bdellovibrionales</taxon>
        <taxon>Pseudobdellovibrionaceae</taxon>
        <taxon>Bdellovibrio</taxon>
    </lineage>
</organism>
<accession>Q6MGL7</accession>
<feature type="chain" id="PRO_0000342904" description="Ribosomal RNA small subunit methyltransferase G 3">
    <location>
        <begin position="1"/>
        <end position="221"/>
    </location>
</feature>
<feature type="binding site" evidence="1">
    <location>
        <position position="85"/>
    </location>
    <ligand>
        <name>S-adenosyl-L-methionine</name>
        <dbReference type="ChEBI" id="CHEBI:59789"/>
    </ligand>
</feature>
<feature type="binding site" evidence="1">
    <location>
        <position position="90"/>
    </location>
    <ligand>
        <name>S-adenosyl-L-methionine</name>
        <dbReference type="ChEBI" id="CHEBI:59789"/>
    </ligand>
</feature>
<feature type="binding site" evidence="1">
    <location>
        <begin position="136"/>
        <end position="137"/>
    </location>
    <ligand>
        <name>S-adenosyl-L-methionine</name>
        <dbReference type="ChEBI" id="CHEBI:59789"/>
    </ligand>
</feature>
<feature type="binding site" evidence="1">
    <location>
        <position position="150"/>
    </location>
    <ligand>
        <name>S-adenosyl-L-methionine</name>
        <dbReference type="ChEBI" id="CHEBI:59789"/>
    </ligand>
</feature>
<dbReference type="EC" id="2.1.1.170" evidence="1"/>
<dbReference type="EMBL" id="BX842656">
    <property type="protein sequence ID" value="CAE81262.1"/>
    <property type="molecule type" value="Genomic_DNA"/>
</dbReference>
<dbReference type="RefSeq" id="WP_011166205.1">
    <property type="nucleotide sequence ID" value="NC_005363.1"/>
</dbReference>
<dbReference type="SMR" id="Q6MGL7"/>
<dbReference type="STRING" id="264462.Bd3908"/>
<dbReference type="GeneID" id="93014673"/>
<dbReference type="KEGG" id="bba:Bd3908"/>
<dbReference type="eggNOG" id="COG0357">
    <property type="taxonomic scope" value="Bacteria"/>
</dbReference>
<dbReference type="HOGENOM" id="CLU_065341_3_0_7"/>
<dbReference type="Proteomes" id="UP000008080">
    <property type="component" value="Chromosome"/>
</dbReference>
<dbReference type="GO" id="GO:0005829">
    <property type="term" value="C:cytosol"/>
    <property type="evidence" value="ECO:0007669"/>
    <property type="project" value="TreeGrafter"/>
</dbReference>
<dbReference type="GO" id="GO:0070043">
    <property type="term" value="F:rRNA (guanine-N7-)-methyltransferase activity"/>
    <property type="evidence" value="ECO:0007669"/>
    <property type="project" value="UniProtKB-UniRule"/>
</dbReference>
<dbReference type="CDD" id="cd02440">
    <property type="entry name" value="AdoMet_MTases"/>
    <property type="match status" value="1"/>
</dbReference>
<dbReference type="Gene3D" id="3.40.50.150">
    <property type="entry name" value="Vaccinia Virus protein VP39"/>
    <property type="match status" value="1"/>
</dbReference>
<dbReference type="HAMAP" id="MF_00074">
    <property type="entry name" value="16SrRNA_methyltr_G"/>
    <property type="match status" value="1"/>
</dbReference>
<dbReference type="InterPro" id="IPR003682">
    <property type="entry name" value="rRNA_ssu_MeTfrase_G"/>
</dbReference>
<dbReference type="InterPro" id="IPR029063">
    <property type="entry name" value="SAM-dependent_MTases_sf"/>
</dbReference>
<dbReference type="NCBIfam" id="TIGR00138">
    <property type="entry name" value="rsmG_gidB"/>
    <property type="match status" value="1"/>
</dbReference>
<dbReference type="PANTHER" id="PTHR31760">
    <property type="entry name" value="S-ADENOSYL-L-METHIONINE-DEPENDENT METHYLTRANSFERASES SUPERFAMILY PROTEIN"/>
    <property type="match status" value="1"/>
</dbReference>
<dbReference type="PANTHER" id="PTHR31760:SF0">
    <property type="entry name" value="S-ADENOSYL-L-METHIONINE-DEPENDENT METHYLTRANSFERASES SUPERFAMILY PROTEIN"/>
    <property type="match status" value="1"/>
</dbReference>
<dbReference type="Pfam" id="PF02527">
    <property type="entry name" value="GidB"/>
    <property type="match status" value="1"/>
</dbReference>
<dbReference type="PIRSF" id="PIRSF003078">
    <property type="entry name" value="GidB"/>
    <property type="match status" value="1"/>
</dbReference>
<dbReference type="SUPFAM" id="SSF53335">
    <property type="entry name" value="S-adenosyl-L-methionine-dependent methyltransferases"/>
    <property type="match status" value="1"/>
</dbReference>
<sequence>MKDNQEQAAPIVYWRIDEWFPDLSPDLRTRLKTYHEELLKFNRTLNLISAKTVFVADALHFADSIMASQAIMKSNPSLDKIYDLGSGNGFPGMIFALLYPKVQVVLVEFDQKKCEFLNHVAGVLKLSNVTVENRTIESFPDGSMKYVMARGLANISKSIMMTRKVVPKGGVFYHLKSEEWGIEVGDIPTQLCSVWAPSLVGEYKLPIGAIKFSVVKTDKIA</sequence>
<reference key="1">
    <citation type="journal article" date="2004" name="Science">
        <title>A predator unmasked: life cycle of Bdellovibrio bacteriovorus from a genomic perspective.</title>
        <authorList>
            <person name="Rendulic S."/>
            <person name="Jagtap P."/>
            <person name="Rosinus A."/>
            <person name="Eppinger M."/>
            <person name="Baar C."/>
            <person name="Lanz C."/>
            <person name="Keller H."/>
            <person name="Lambert C."/>
            <person name="Evans K.J."/>
            <person name="Goesmann A."/>
            <person name="Meyer F."/>
            <person name="Sockett R.E."/>
            <person name="Schuster S.C."/>
        </authorList>
    </citation>
    <scope>NUCLEOTIDE SEQUENCE [LARGE SCALE GENOMIC DNA]</scope>
    <source>
        <strain>ATCC 15356 / DSM 50701 / NCIMB 9529 / HD100</strain>
    </source>
</reference>
<proteinExistence type="inferred from homology"/>
<gene>
    <name evidence="1" type="primary">rsmG3</name>
    <name type="ordered locus">Bd3908</name>
</gene>